<feature type="signal peptide" evidence="4">
    <location>
        <begin position="1"/>
        <end position="23"/>
    </location>
</feature>
<feature type="chain" id="PRO_0000034721" description="Toll-like receptor 4">
    <location>
        <begin position="24"/>
        <end position="843"/>
    </location>
</feature>
<feature type="topological domain" description="Extracellular" evidence="4">
    <location>
        <begin position="24"/>
        <end position="633"/>
    </location>
</feature>
<feature type="transmembrane region" description="Helical" evidence="4">
    <location>
        <begin position="634"/>
        <end position="654"/>
    </location>
</feature>
<feature type="topological domain" description="Cytoplasmic" evidence="4">
    <location>
        <begin position="655"/>
        <end position="843"/>
    </location>
</feature>
<feature type="domain" description="LRRNT">
    <location>
        <begin position="24"/>
        <end position="54"/>
    </location>
</feature>
<feature type="repeat" description="LRR 1">
    <location>
        <begin position="55"/>
        <end position="76"/>
    </location>
</feature>
<feature type="repeat" description="LRR 2">
    <location>
        <begin position="79"/>
        <end position="100"/>
    </location>
</feature>
<feature type="repeat" description="LRR 3">
    <location>
        <begin position="103"/>
        <end position="124"/>
    </location>
</feature>
<feature type="repeat" description="LRR 4">
    <location>
        <begin position="127"/>
        <end position="148"/>
    </location>
</feature>
<feature type="repeat" description="LRR 5">
    <location>
        <begin position="151"/>
        <end position="172"/>
    </location>
</feature>
<feature type="repeat" description="LRR 6">
    <location>
        <begin position="176"/>
        <end position="197"/>
    </location>
</feature>
<feature type="repeat" description="LRR 7">
    <location>
        <begin position="205"/>
        <end position="225"/>
    </location>
</feature>
<feature type="repeat" description="LRR 8">
    <location>
        <begin position="227"/>
        <end position="247"/>
    </location>
</feature>
<feature type="repeat" description="LRR 9">
    <location>
        <begin position="353"/>
        <end position="374"/>
    </location>
</feature>
<feature type="repeat" description="LRR 10">
    <location>
        <begin position="375"/>
        <end position="398"/>
    </location>
</feature>
<feature type="repeat" description="LRR 11">
    <location>
        <begin position="401"/>
        <end position="423"/>
    </location>
</feature>
<feature type="repeat" description="LRR 12">
    <location>
        <begin position="424"/>
        <end position="445"/>
    </location>
</feature>
<feature type="repeat" description="LRR 13">
    <location>
        <begin position="449"/>
        <end position="459"/>
    </location>
</feature>
<feature type="repeat" description="LRR 14">
    <location>
        <begin position="473"/>
        <end position="496"/>
    </location>
</feature>
<feature type="repeat" description="LRR 15">
    <location>
        <begin position="498"/>
        <end position="519"/>
    </location>
</feature>
<feature type="repeat" description="LRR 16">
    <location>
        <begin position="522"/>
        <end position="543"/>
    </location>
</feature>
<feature type="repeat" description="LRR 17">
    <location>
        <begin position="546"/>
        <end position="569"/>
    </location>
</feature>
<feature type="domain" description="LRRCT">
    <location>
        <begin position="580"/>
        <end position="631"/>
    </location>
</feature>
<feature type="domain" description="TIR" evidence="5">
    <location>
        <begin position="674"/>
        <end position="817"/>
    </location>
</feature>
<feature type="region of interest" description="Disordered" evidence="6">
    <location>
        <begin position="824"/>
        <end position="843"/>
    </location>
</feature>
<feature type="compositionally biased region" description="Basic and acidic residues" evidence="6">
    <location>
        <begin position="832"/>
        <end position="843"/>
    </location>
</feature>
<feature type="glycosylation site" description="N-linked (GlcNAc...) asparagine" evidence="4">
    <location>
        <position position="35"/>
    </location>
</feature>
<feature type="glycosylation site" description="N-linked (GlcNAc...) asparagine" evidence="4">
    <location>
        <position position="189"/>
    </location>
</feature>
<feature type="glycosylation site" description="N-linked (GlcNAc...) asparagine" evidence="4">
    <location>
        <position position="205"/>
    </location>
</feature>
<feature type="glycosylation site" description="N-linked (GlcNAc...) asparagine" evidence="4">
    <location>
        <position position="282"/>
    </location>
</feature>
<feature type="glycosylation site" description="N-linked (GlcNAc...) asparagine" evidence="4">
    <location>
        <position position="295"/>
    </location>
</feature>
<feature type="glycosylation site" description="N-linked (GlcNAc...) asparagine" evidence="4">
    <location>
        <position position="498"/>
    </location>
</feature>
<feature type="glycosylation site" description="N-linked (GlcNAc...) asparagine" evidence="4">
    <location>
        <position position="527"/>
    </location>
</feature>
<feature type="glycosylation site" description="N-linked (GlcNAc...) asparagine" evidence="4">
    <location>
        <position position="576"/>
    </location>
</feature>
<feature type="glycosylation site" description="N-linked (GlcNAc...) asparagine" evidence="4">
    <location>
        <position position="626"/>
    </location>
</feature>
<feature type="disulfide bond" evidence="1">
    <location>
        <begin position="29"/>
        <end position="40"/>
    </location>
</feature>
<feature type="disulfide bond" evidence="1">
    <location>
        <begin position="391"/>
        <end position="392"/>
    </location>
</feature>
<feature type="disulfide bond" evidence="1">
    <location>
        <begin position="584"/>
        <end position="610"/>
    </location>
</feature>
<feature type="disulfide bond" evidence="1">
    <location>
        <begin position="586"/>
        <end position="629"/>
    </location>
</feature>
<accession>Q9MYW3</accession>
<gene>
    <name type="primary">TLR4</name>
</gene>
<proteinExistence type="evidence at transcript level"/>
<name>TLR4_HORSE</name>
<comment type="function">
    <text evidence="2">Transmembrane receptor that functions as a pattern recognition receptor recognizing pathogen- and damage-associated molecular patterns (PAMPs and DAMPs) to induce innate immune responses via downstream signaling pathways. At the plasma membrane, cooperates with LY96 to mediate the innate immune response to bacterial lipopolysaccharide (LPS). Also involved in LPS-independent inflammatory responses triggered by free fatty acids, such as palmitate, and Ni(2+). Mechanistically, acts via MYD88, TIRAP and TRAF6, leading to NF-kappa-B activation, cytokine secretion and the inflammatory response. Alternatively, CD14-mediated TLR4 internalization via endocytosis is associated with the initiation of a MYD88-independent signaling via the TICAM1-TBK1-IRF3 axis leading to type I interferon production. In addition to the secretion of proinflammatory cytokines, initiates the activation of NLRP3 inflammasome and formation of a positive feedback loop between autophagy and NF-kappa-B signaling cascade. In complex with TLR6, promotes inflammation in monocytes/macrophages by associating with TLR6 and the receptor CD86. Upon ligand binding, such as oxLDL or amyloid-beta 42, the TLR4:TLR6 complex is internalized and triggers inflammatory response, leading to NF-kappa-B-dependent production of CXCL1, CXCL2 and CCL9 cytokines, via MYD88 signaling pathway, and CCL5 cytokine, via TICAM1 signaling pathway. In myeloid dendritic cells, vesicular stomatitis virus glycoprotein G but not LPS promotes the activation of IRF7, leading to type I IFN production in a CD14-dependent manner.</text>
</comment>
<comment type="subunit">
    <text evidence="2 3">Belongs to the lipopolysaccharide (LPS) receptor, a multi-protein complex containing at least CD14, LY96 and TLR4. Binding to bacterial LPS leads to homodimerization. Interacts with LY96 via the extracellular domain. Interacts with MYD88 and TIRAP via their respective TIR domains. Interacts with NOX4. Interacts with CNPY3 and HSP90B1; this interaction is required for proper folding in the endoplasmic reticulum. Interacts with MAP3K21; this interaction leads to negative regulation of TLR4 signaling. Interacts with CD36, following CD36 stimulation by oxLDL or amyloid-beta 42, and forms a heterodimer with TLR6. The trimeric complex is internalized and triggers inflammatory response. LYN kinase activity facilitates TLR4-TLR6 heterodimerization and signal initiation. Interacts with TICAM1 in response to LPS in a WDFY1-dependent manner. Interacts with WDFY1 in response to LPS. Interacts with SMPDL3B. Interacts with CEACAM1; upon lipopolysaccharide stimulation, forms a complex including TLR4 and the phosphorylated form of SYK and CEACAM1, which in turn, recruits PTPN6 that dephosphorylates SYK, reducing the production of reactive oxygen species (ROS) and lysosome disruption, which in turn, reduces the activity of the inflammasome. Interacts with RFTN1; the interaction occurs in response to lipopolysaccharide stimulation. Interacts with SCIMP; the interaction occurs in response to lipopolysaccharide stimulation and is enhanced by phosphorylation of SCIMP by LYN (By similarity). This interaction facilitates the phosphorylation of TLR4 by LYN which elicits a selective cytokine response in macrophages (By similarity). Interacts with TRAF3IP3 (By similarity). Interacts with TREM1; this interaction enhances TLR4-mediated inflammatory response (By similarity). Interacts with ZG16B/PAUF (By similarity). Interacts with CD82; this interaction inhibits TLR4-mediated signaling pathway (By similarity).</text>
</comment>
<comment type="subcellular location">
    <subcellularLocation>
        <location evidence="2">Cell membrane</location>
        <topology evidence="1">Single-pass type I membrane protein</topology>
    </subcellularLocation>
    <subcellularLocation>
        <location evidence="2">Early endosome</location>
    </subcellularLocation>
    <subcellularLocation>
        <location evidence="3">Cell projection</location>
        <location evidence="3">Ruffle</location>
    </subcellularLocation>
    <text evidence="2">Upon complex formation with CD36 and TLR6, internalized through dynamin-dependent endocytosis. Colocalizes with RFTN1 at cell membrane and then together with RFTN1 moves to endosomes, upon lipopolysaccharide stimulation.</text>
</comment>
<comment type="domain">
    <text evidence="1">The TIR domain mediates interaction with NOX4.</text>
</comment>
<comment type="PTM">
    <text evidence="3">Phosphorylated on tyrosine residues by LYN after binding lipopolysaccharide.</text>
</comment>
<comment type="PTM">
    <text evidence="2">Ubiquitinated by RNF128 via 'Lys-28'-linked polyubiquitin chains, leading to proteasomal degradation.</text>
</comment>
<comment type="similarity">
    <text evidence="7">Belongs to the Toll-like receptor family.</text>
</comment>
<comment type="caution">
    <text evidence="2 7">In some plant proteins and in human SARM1, the TIR domain has NAD(+) hydrolase (NADase) activity (By similarity). However, despite the presence of the catalytic Asp residue, the isolated TIR domain of human TLR4 lacks NADase activity (By similarity). Based on this, it is unlikely that Toll-like receptors have NADase activity.</text>
</comment>
<evidence type="ECO:0000250" key="1"/>
<evidence type="ECO:0000250" key="2">
    <source>
        <dbReference type="UniProtKB" id="O00206"/>
    </source>
</evidence>
<evidence type="ECO:0000250" key="3">
    <source>
        <dbReference type="UniProtKB" id="Q9QUK6"/>
    </source>
</evidence>
<evidence type="ECO:0000255" key="4"/>
<evidence type="ECO:0000255" key="5">
    <source>
        <dbReference type="PROSITE-ProRule" id="PRU00204"/>
    </source>
</evidence>
<evidence type="ECO:0000256" key="6">
    <source>
        <dbReference type="SAM" id="MobiDB-lite"/>
    </source>
</evidence>
<evidence type="ECO:0000305" key="7"/>
<protein>
    <recommendedName>
        <fullName>Toll-like receptor 4</fullName>
    </recommendedName>
    <cdAntigenName>CD284</cdAntigenName>
</protein>
<reference key="1">
    <citation type="submission" date="2000-07" db="EMBL/GenBank/DDBJ databases">
        <title>Cloning and sequencing of equine Toll-like receptor 4 (TLR4).</title>
        <authorList>
            <person name="Vandenplas M.L."/>
            <person name="McNeill B.W."/>
            <person name="Barton M.H."/>
            <person name="Moore J.N."/>
        </authorList>
    </citation>
    <scope>NUCLEOTIDE SEQUENCE [MRNA]</scope>
</reference>
<dbReference type="EMBL" id="AY005808">
    <property type="protein sequence ID" value="AAF91076.1"/>
    <property type="molecule type" value="mRNA"/>
</dbReference>
<dbReference type="RefSeq" id="NP_001093239.2">
    <property type="nucleotide sequence ID" value="NM_001099769.2"/>
</dbReference>
<dbReference type="SMR" id="Q9MYW3"/>
<dbReference type="FunCoup" id="Q9MYW3">
    <property type="interactions" value="437"/>
</dbReference>
<dbReference type="STRING" id="9796.ENSECAP00000008292"/>
<dbReference type="GlyCosmos" id="Q9MYW3">
    <property type="glycosylation" value="9 sites, No reported glycans"/>
</dbReference>
<dbReference type="PaxDb" id="9796-ENSECAP00000008292"/>
<dbReference type="Ensembl" id="ENSECAT00000044702.1">
    <property type="protein sequence ID" value="ENSECAP00000033420.1"/>
    <property type="gene ID" value="ENSECAG00000033740.1"/>
</dbReference>
<dbReference type="GeneID" id="100066890"/>
<dbReference type="KEGG" id="ecb:100066890"/>
<dbReference type="CTD" id="7099"/>
<dbReference type="GeneTree" id="ENSGT00940000160778"/>
<dbReference type="InParanoid" id="Q9MYW3"/>
<dbReference type="OMA" id="CKHSAER"/>
<dbReference type="OrthoDB" id="1421090at2759"/>
<dbReference type="Proteomes" id="UP000002281">
    <property type="component" value="Unplaced"/>
</dbReference>
<dbReference type="Bgee" id="ENSECAG00000010339">
    <property type="expression patterns" value="Expressed in chorionic villus and 19 other cell types or tissues"/>
</dbReference>
<dbReference type="GO" id="GO:0005769">
    <property type="term" value="C:early endosome"/>
    <property type="evidence" value="ECO:0007669"/>
    <property type="project" value="UniProtKB-SubCell"/>
</dbReference>
<dbReference type="GO" id="GO:0046696">
    <property type="term" value="C:lipopolysaccharide receptor complex"/>
    <property type="evidence" value="ECO:0000250"/>
    <property type="project" value="UniProtKB"/>
</dbReference>
<dbReference type="GO" id="GO:0005886">
    <property type="term" value="C:plasma membrane"/>
    <property type="evidence" value="ECO:0000250"/>
    <property type="project" value="UniProtKB"/>
</dbReference>
<dbReference type="GO" id="GO:0001726">
    <property type="term" value="C:ruffle"/>
    <property type="evidence" value="ECO:0007669"/>
    <property type="project" value="UniProtKB-SubCell"/>
</dbReference>
<dbReference type="GO" id="GO:0001530">
    <property type="term" value="F:lipopolysaccharide binding"/>
    <property type="evidence" value="ECO:0000318"/>
    <property type="project" value="GO_Central"/>
</dbReference>
<dbReference type="GO" id="GO:0001875">
    <property type="term" value="F:lipopolysaccharide immune receptor activity"/>
    <property type="evidence" value="ECO:0000250"/>
    <property type="project" value="UniProtKB"/>
</dbReference>
<dbReference type="GO" id="GO:0061809">
    <property type="term" value="F:NAD+ nucleosidase activity, cyclic ADP-ribose generating"/>
    <property type="evidence" value="ECO:0007669"/>
    <property type="project" value="UniProtKB-EC"/>
</dbReference>
<dbReference type="GO" id="GO:0004888">
    <property type="term" value="F:transmembrane signaling receptor activity"/>
    <property type="evidence" value="ECO:0007669"/>
    <property type="project" value="InterPro"/>
</dbReference>
<dbReference type="GO" id="GO:0050829">
    <property type="term" value="P:defense response to Gram-negative bacterium"/>
    <property type="evidence" value="ECO:0000318"/>
    <property type="project" value="GO_Central"/>
</dbReference>
<dbReference type="GO" id="GO:0032497">
    <property type="term" value="P:detection of lipopolysaccharide"/>
    <property type="evidence" value="ECO:0000250"/>
    <property type="project" value="UniProtKB"/>
</dbReference>
<dbReference type="GO" id="GO:0006954">
    <property type="term" value="P:inflammatory response"/>
    <property type="evidence" value="ECO:0000318"/>
    <property type="project" value="GO_Central"/>
</dbReference>
<dbReference type="GO" id="GO:0045087">
    <property type="term" value="P:innate immune response"/>
    <property type="evidence" value="ECO:0007669"/>
    <property type="project" value="UniProtKB-KW"/>
</dbReference>
<dbReference type="GO" id="GO:0042116">
    <property type="term" value="P:macrophage activation"/>
    <property type="evidence" value="ECO:0000250"/>
    <property type="project" value="UniProtKB"/>
</dbReference>
<dbReference type="GO" id="GO:0002755">
    <property type="term" value="P:MyD88-dependent toll-like receptor signaling pathway"/>
    <property type="evidence" value="ECO:0000318"/>
    <property type="project" value="GO_Central"/>
</dbReference>
<dbReference type="GO" id="GO:0032731">
    <property type="term" value="P:positive regulation of interleukin-1 beta production"/>
    <property type="evidence" value="ECO:0000250"/>
    <property type="project" value="UniProtKB"/>
</dbReference>
<dbReference type="GO" id="GO:1900227">
    <property type="term" value="P:positive regulation of NLRP3 inflammasome complex assembly"/>
    <property type="evidence" value="ECO:0000250"/>
    <property type="project" value="UniProtKB"/>
</dbReference>
<dbReference type="GO" id="GO:0034142">
    <property type="term" value="P:toll-like receptor 4 signaling pathway"/>
    <property type="evidence" value="ECO:0000318"/>
    <property type="project" value="GO_Central"/>
</dbReference>
<dbReference type="FunFam" id="3.40.50.10140:FF:000006">
    <property type="entry name" value="Toll-like receptor 4"/>
    <property type="match status" value="1"/>
</dbReference>
<dbReference type="FunFam" id="3.80.10.10:FF:000195">
    <property type="entry name" value="Toll-like receptor 4"/>
    <property type="match status" value="1"/>
</dbReference>
<dbReference type="Gene3D" id="3.80.10.10">
    <property type="entry name" value="Ribonuclease Inhibitor"/>
    <property type="match status" value="1"/>
</dbReference>
<dbReference type="Gene3D" id="3.40.50.10140">
    <property type="entry name" value="Toll/interleukin-1 receptor homology (TIR) domain"/>
    <property type="match status" value="1"/>
</dbReference>
<dbReference type="InterPro" id="IPR000483">
    <property type="entry name" value="Cys-rich_flank_reg_C"/>
</dbReference>
<dbReference type="InterPro" id="IPR001611">
    <property type="entry name" value="Leu-rich_rpt"/>
</dbReference>
<dbReference type="InterPro" id="IPR025875">
    <property type="entry name" value="Leu-rich_rpt_4"/>
</dbReference>
<dbReference type="InterPro" id="IPR003591">
    <property type="entry name" value="Leu-rich_rpt_typical-subtyp"/>
</dbReference>
<dbReference type="InterPro" id="IPR032675">
    <property type="entry name" value="LRR_dom_sf"/>
</dbReference>
<dbReference type="InterPro" id="IPR000157">
    <property type="entry name" value="TIR_dom"/>
</dbReference>
<dbReference type="InterPro" id="IPR017241">
    <property type="entry name" value="Toll-like_receptor"/>
</dbReference>
<dbReference type="InterPro" id="IPR035897">
    <property type="entry name" value="Toll_tir_struct_dom_sf"/>
</dbReference>
<dbReference type="PANTHER" id="PTHR24365">
    <property type="entry name" value="TOLL-LIKE RECEPTOR"/>
    <property type="match status" value="1"/>
</dbReference>
<dbReference type="PANTHER" id="PTHR24365:SF521">
    <property type="entry name" value="TOLL-LIKE RECEPTOR 4"/>
    <property type="match status" value="1"/>
</dbReference>
<dbReference type="Pfam" id="PF12799">
    <property type="entry name" value="LRR_4"/>
    <property type="match status" value="1"/>
</dbReference>
<dbReference type="Pfam" id="PF13855">
    <property type="entry name" value="LRR_8"/>
    <property type="match status" value="2"/>
</dbReference>
<dbReference type="Pfam" id="PF01582">
    <property type="entry name" value="TIR"/>
    <property type="match status" value="1"/>
</dbReference>
<dbReference type="PIRSF" id="PIRSF037595">
    <property type="entry name" value="Toll-like_receptor"/>
    <property type="match status" value="1"/>
</dbReference>
<dbReference type="PRINTS" id="PR00019">
    <property type="entry name" value="LEURICHRPT"/>
</dbReference>
<dbReference type="SMART" id="SM00365">
    <property type="entry name" value="LRR_SD22"/>
    <property type="match status" value="5"/>
</dbReference>
<dbReference type="SMART" id="SM00369">
    <property type="entry name" value="LRR_TYP"/>
    <property type="match status" value="11"/>
</dbReference>
<dbReference type="SMART" id="SM00082">
    <property type="entry name" value="LRRCT"/>
    <property type="match status" value="1"/>
</dbReference>
<dbReference type="SMART" id="SM00255">
    <property type="entry name" value="TIR"/>
    <property type="match status" value="1"/>
</dbReference>
<dbReference type="SUPFAM" id="SSF52047">
    <property type="entry name" value="RNI-like"/>
    <property type="match status" value="2"/>
</dbReference>
<dbReference type="SUPFAM" id="SSF52200">
    <property type="entry name" value="Toll/Interleukin receptor TIR domain"/>
    <property type="match status" value="1"/>
</dbReference>
<dbReference type="PROSITE" id="PS51450">
    <property type="entry name" value="LRR"/>
    <property type="match status" value="12"/>
</dbReference>
<dbReference type="PROSITE" id="PS50104">
    <property type="entry name" value="TIR"/>
    <property type="match status" value="1"/>
</dbReference>
<keyword id="KW-1003">Cell membrane</keyword>
<keyword id="KW-0966">Cell projection</keyword>
<keyword id="KW-1015">Disulfide bond</keyword>
<keyword id="KW-0967">Endosome</keyword>
<keyword id="KW-0325">Glycoprotein</keyword>
<keyword id="KW-0391">Immunity</keyword>
<keyword id="KW-0395">Inflammatory response</keyword>
<keyword id="KW-0399">Innate immunity</keyword>
<keyword id="KW-0433">Leucine-rich repeat</keyword>
<keyword id="KW-0472">Membrane</keyword>
<keyword id="KW-0520">NAD</keyword>
<keyword id="KW-0675">Receptor</keyword>
<keyword id="KW-1185">Reference proteome</keyword>
<keyword id="KW-0677">Repeat</keyword>
<keyword id="KW-0732">Signal</keyword>
<keyword id="KW-0812">Transmembrane</keyword>
<keyword id="KW-1133">Transmembrane helix</keyword>
<keyword id="KW-0832">Ubl conjugation</keyword>
<sequence length="843" mass="96496">MMPPTRLAGTLIPAMAFLSCLRPESWDPCVQVVPNTTYQCMDLNLYKIPENIPTSTKELDLSFNPLKELGSHSFSNFPELQVLDLSRCEIEMIEDDAYQGLNHLSTLILTGNPIRSLALGAFSGLSSLQTLVAVETKLSSLEKFPIGHLKTLKELNVAHNLIHSFKLPEYFSKMPNLEHLDLSNNKIQNISHEDLRVLHQMPLLNLSLDLSLNPLEFIQPDAFKEIKLHKLTLRSNFDSIDVMKSCIQGLAGLKVNRLVLGEFKNERKLERFDTSALRGLHNLTIEEFRLAYIDNYSSKDSIDLLNCLADISKISLVSLDLGNLKDFPKGFGWQDFELVNCRIEGFPTLELTSLKRLVFTSNKDMKSFNEVKLPSLEFLDLSRNRLSFKSCCSEADLKTTRLKHLDLSFNDVISMSSNFMGLEQLEHLDFQHSTLKQASDFPVFLSLKNLRYLDISYTNTRVVFHGIFDGLVSLQVLKMAGNSFKDNFLPNIFREMTNLTTLDLSKCNLEQVSQEAFCLLPRLRVLNMSHNNLLFLDMLPYKPLHSLQILDCSFNRIVAFKWQELQHFPSSLASLNLTQNDFACVCEYQSFLQWVKDQRQLLVEVEHLVCAIPLQMRGMPVLGFNNATCQISKTIVGGSVFSILMVSVIAVLVYKFYFHLMLLAGCKKYGRGESIYDAFVIYSSQDEDWVRNELVKNLEEGVPPFQLCLHYRDFIPGVAIAANIIQEGFHKSRKVIVVVSQHFIQSRWCIFEYEIAQTWQFLSSRAGIIFIVLHKLEKSLLRQQVELYRLLNRNTYLEWEDSVLGRHIFWRRLRKALLDGKPWSPAGTADAAESRQHDAETST</sequence>
<organism>
    <name type="scientific">Equus caballus</name>
    <name type="common">Horse</name>
    <dbReference type="NCBI Taxonomy" id="9796"/>
    <lineage>
        <taxon>Eukaryota</taxon>
        <taxon>Metazoa</taxon>
        <taxon>Chordata</taxon>
        <taxon>Craniata</taxon>
        <taxon>Vertebrata</taxon>
        <taxon>Euteleostomi</taxon>
        <taxon>Mammalia</taxon>
        <taxon>Eutheria</taxon>
        <taxon>Laurasiatheria</taxon>
        <taxon>Perissodactyla</taxon>
        <taxon>Equidae</taxon>
        <taxon>Equus</taxon>
    </lineage>
</organism>